<sequence>MDPGNENSATEAAAIIDLDPDFEPQSRPRSCTWPLPRPEIANQPSEPPEVEPDLGEKVHTEGRSEPILLPSRLPEPAGGPQPGILGAVTGPRKGGSRRNAWGNQSYAELISQAIESAPEKRLTLAQIYEWMVRTVPYFKDKGDSNSSAGWKNSIRHNLSLHSKFIKVHNEATGKSSWWMLNPEGGKSGKAPRRRAASMDSSSKLLRGRSKAPKKKPSVLPAPPEGATPTSPVGHFAKWSGSPCSRNREEADMWTTFRPRSSSNASSVSTRLSPLRPESEVLAEEIPASVSSYAGGVPPTLNEGLELLDGLNLTSSHSLLSRSGLSGFSLQHPGVTGPLHTYSSSLFSPAEGPLSAGEGCFSSSQALEALLTSDTPPPPADVLMTQVDPILSQAPTLLLLGGLPSSSKLATGVGLCPKPLEAPGPSSLVPTLSMIAPPPVMASAPIPKALGTPVLTPPTEAASQDRMPQDLDLDMYMENLECDMDNIISDLMDEGEGLDFNFEPDP</sequence>
<evidence type="ECO:0000250" key="1">
    <source>
        <dbReference type="UniProtKB" id="Q9WVH3"/>
    </source>
</evidence>
<evidence type="ECO:0000255" key="2">
    <source>
        <dbReference type="PROSITE-ProRule" id="PRU00089"/>
    </source>
</evidence>
<evidence type="ECO:0000256" key="3">
    <source>
        <dbReference type="SAM" id="MobiDB-lite"/>
    </source>
</evidence>
<evidence type="ECO:0000269" key="4">
    <source>
    </source>
</evidence>
<evidence type="ECO:0000269" key="5">
    <source>
    </source>
</evidence>
<evidence type="ECO:0000269" key="6">
    <source>
    </source>
</evidence>
<evidence type="ECO:0000269" key="7">
    <source>
    </source>
</evidence>
<evidence type="ECO:0000269" key="8">
    <source>
    </source>
</evidence>
<evidence type="ECO:0000269" key="9">
    <source>
    </source>
</evidence>
<evidence type="ECO:0000269" key="10">
    <source>
    </source>
</evidence>
<evidence type="ECO:0000269" key="11">
    <source>
    </source>
</evidence>
<evidence type="ECO:0000269" key="12">
    <source>
    </source>
</evidence>
<evidence type="ECO:0000269" key="13">
    <source>
    </source>
</evidence>
<evidence type="ECO:0000269" key="14">
    <source>
    </source>
</evidence>
<evidence type="ECO:0000303" key="15">
    <source>
    </source>
</evidence>
<evidence type="ECO:0000305" key="16"/>
<evidence type="ECO:0007829" key="17">
    <source>
        <dbReference type="PDB" id="1E17"/>
    </source>
</evidence>
<evidence type="ECO:0007829" key="18">
    <source>
        <dbReference type="PDB" id="3L2C"/>
    </source>
</evidence>
<keyword id="KW-0002">3D-structure</keyword>
<keyword id="KW-0007">Acetylation</keyword>
<keyword id="KW-0010">Activator</keyword>
<keyword id="KW-0025">Alternative splicing</keyword>
<keyword id="KW-0131">Cell cycle</keyword>
<keyword id="KW-0160">Chromosomal rearrangement</keyword>
<keyword id="KW-0963">Cytoplasm</keyword>
<keyword id="KW-0217">Developmental protein</keyword>
<keyword id="KW-0221">Differentiation</keyword>
<keyword id="KW-0238">DNA-binding</keyword>
<keyword id="KW-0517">Myogenesis</keyword>
<keyword id="KW-0539">Nucleus</keyword>
<keyword id="KW-0582">Pharmaceutical</keyword>
<keyword id="KW-0597">Phosphoprotein</keyword>
<keyword id="KW-1267">Proteomics identification</keyword>
<keyword id="KW-0656">Proto-oncogene</keyword>
<keyword id="KW-1185">Reference proteome</keyword>
<keyword id="KW-0804">Transcription</keyword>
<keyword id="KW-0805">Transcription regulation</keyword>
<keyword id="KW-0832">Ubl conjugation</keyword>
<name>FOXO4_HUMAN</name>
<protein>
    <recommendedName>
        <fullName>Forkhead box protein O4</fullName>
    </recommendedName>
    <alternativeName>
        <fullName>Fork head domain transcription factor AFX1</fullName>
    </alternativeName>
</protein>
<reference key="1">
    <citation type="journal article" date="1997" name="Hum. Genet.">
        <title>AFX1 and p54nrb: fine mapping, genomic structure, and exclusion as candidate genes of X-linked dystonia parkinsonism.</title>
        <authorList>
            <person name="Peters U."/>
            <person name="Haberhausen G."/>
            <person name="Kostrzewa M."/>
            <person name="Nolte D."/>
            <person name="Mueller U."/>
        </authorList>
    </citation>
    <scope>NUCLEOTIDE SEQUENCE [GENOMIC DNA]</scope>
    <source>
        <tissue>Blood</tissue>
    </source>
</reference>
<reference key="2">
    <citation type="journal article" date="1997" name="Oncogene">
        <title>Cloning and characterization of AFX, the gene that fuses to MLL in acute leukemias with a t(X;11)(q13;q23).</title>
        <authorList>
            <person name="Borkhardt A."/>
            <person name="Repp R."/>
            <person name="Haas O.A."/>
            <person name="Leis T."/>
            <person name="Harbott J."/>
            <person name="Kreuder J."/>
            <person name="Hammermann J."/>
            <person name="Henn T."/>
            <person name="Lampert F."/>
        </authorList>
    </citation>
    <scope>NUCLEOTIDE SEQUENCE [MRNA] (ISOFORM 1)</scope>
</reference>
<reference key="3">
    <citation type="journal article" date="2002" name="J. Biol. Chem.">
        <title>An mRNA splice variant of the AFX gene with altered transcriptional activity.</title>
        <authorList>
            <person name="Yang Z."/>
            <person name="Whelan J."/>
            <person name="Babb R."/>
            <person name="Bowen B.R."/>
        </authorList>
    </citation>
    <scope>NUCLEOTIDE SEQUENCE [MRNA] (ISOFORM ZETA)</scope>
</reference>
<reference key="4">
    <citation type="journal article" date="2005" name="Nature">
        <title>The DNA sequence of the human X chromosome.</title>
        <authorList>
            <person name="Ross M.T."/>
            <person name="Grafham D.V."/>
            <person name="Coffey A.J."/>
            <person name="Scherer S."/>
            <person name="McLay K."/>
            <person name="Muzny D."/>
            <person name="Platzer M."/>
            <person name="Howell G.R."/>
            <person name="Burrows C."/>
            <person name="Bird C.P."/>
            <person name="Frankish A."/>
            <person name="Lovell F.L."/>
            <person name="Howe K.L."/>
            <person name="Ashurst J.L."/>
            <person name="Fulton R.S."/>
            <person name="Sudbrak R."/>
            <person name="Wen G."/>
            <person name="Jones M.C."/>
            <person name="Hurles M.E."/>
            <person name="Andrews T.D."/>
            <person name="Scott C.E."/>
            <person name="Searle S."/>
            <person name="Ramser J."/>
            <person name="Whittaker A."/>
            <person name="Deadman R."/>
            <person name="Carter N.P."/>
            <person name="Hunt S.E."/>
            <person name="Chen R."/>
            <person name="Cree A."/>
            <person name="Gunaratne P."/>
            <person name="Havlak P."/>
            <person name="Hodgson A."/>
            <person name="Metzker M.L."/>
            <person name="Richards S."/>
            <person name="Scott G."/>
            <person name="Steffen D."/>
            <person name="Sodergren E."/>
            <person name="Wheeler D.A."/>
            <person name="Worley K.C."/>
            <person name="Ainscough R."/>
            <person name="Ambrose K.D."/>
            <person name="Ansari-Lari M.A."/>
            <person name="Aradhya S."/>
            <person name="Ashwell R.I."/>
            <person name="Babbage A.K."/>
            <person name="Bagguley C.L."/>
            <person name="Ballabio A."/>
            <person name="Banerjee R."/>
            <person name="Barker G.E."/>
            <person name="Barlow K.F."/>
            <person name="Barrett I.P."/>
            <person name="Bates K.N."/>
            <person name="Beare D.M."/>
            <person name="Beasley H."/>
            <person name="Beasley O."/>
            <person name="Beck A."/>
            <person name="Bethel G."/>
            <person name="Blechschmidt K."/>
            <person name="Brady N."/>
            <person name="Bray-Allen S."/>
            <person name="Bridgeman A.M."/>
            <person name="Brown A.J."/>
            <person name="Brown M.J."/>
            <person name="Bonnin D."/>
            <person name="Bruford E.A."/>
            <person name="Buhay C."/>
            <person name="Burch P."/>
            <person name="Burford D."/>
            <person name="Burgess J."/>
            <person name="Burrill W."/>
            <person name="Burton J."/>
            <person name="Bye J.M."/>
            <person name="Carder C."/>
            <person name="Carrel L."/>
            <person name="Chako J."/>
            <person name="Chapman J.C."/>
            <person name="Chavez D."/>
            <person name="Chen E."/>
            <person name="Chen G."/>
            <person name="Chen Y."/>
            <person name="Chen Z."/>
            <person name="Chinault C."/>
            <person name="Ciccodicola A."/>
            <person name="Clark S.Y."/>
            <person name="Clarke G."/>
            <person name="Clee C.M."/>
            <person name="Clegg S."/>
            <person name="Clerc-Blankenburg K."/>
            <person name="Clifford K."/>
            <person name="Cobley V."/>
            <person name="Cole C.G."/>
            <person name="Conquer J.S."/>
            <person name="Corby N."/>
            <person name="Connor R.E."/>
            <person name="David R."/>
            <person name="Davies J."/>
            <person name="Davis C."/>
            <person name="Davis J."/>
            <person name="Delgado O."/>
            <person name="Deshazo D."/>
            <person name="Dhami P."/>
            <person name="Ding Y."/>
            <person name="Dinh H."/>
            <person name="Dodsworth S."/>
            <person name="Draper H."/>
            <person name="Dugan-Rocha S."/>
            <person name="Dunham A."/>
            <person name="Dunn M."/>
            <person name="Durbin K.J."/>
            <person name="Dutta I."/>
            <person name="Eades T."/>
            <person name="Ellwood M."/>
            <person name="Emery-Cohen A."/>
            <person name="Errington H."/>
            <person name="Evans K.L."/>
            <person name="Faulkner L."/>
            <person name="Francis F."/>
            <person name="Frankland J."/>
            <person name="Fraser A.E."/>
            <person name="Galgoczy P."/>
            <person name="Gilbert J."/>
            <person name="Gill R."/>
            <person name="Gloeckner G."/>
            <person name="Gregory S.G."/>
            <person name="Gribble S."/>
            <person name="Griffiths C."/>
            <person name="Grocock R."/>
            <person name="Gu Y."/>
            <person name="Gwilliam R."/>
            <person name="Hamilton C."/>
            <person name="Hart E.A."/>
            <person name="Hawes A."/>
            <person name="Heath P.D."/>
            <person name="Heitmann K."/>
            <person name="Hennig S."/>
            <person name="Hernandez J."/>
            <person name="Hinzmann B."/>
            <person name="Ho S."/>
            <person name="Hoffs M."/>
            <person name="Howden P.J."/>
            <person name="Huckle E.J."/>
            <person name="Hume J."/>
            <person name="Hunt P.J."/>
            <person name="Hunt A.R."/>
            <person name="Isherwood J."/>
            <person name="Jacob L."/>
            <person name="Johnson D."/>
            <person name="Jones S."/>
            <person name="de Jong P.J."/>
            <person name="Joseph S.S."/>
            <person name="Keenan S."/>
            <person name="Kelly S."/>
            <person name="Kershaw J.K."/>
            <person name="Khan Z."/>
            <person name="Kioschis P."/>
            <person name="Klages S."/>
            <person name="Knights A.J."/>
            <person name="Kosiura A."/>
            <person name="Kovar-Smith C."/>
            <person name="Laird G.K."/>
            <person name="Langford C."/>
            <person name="Lawlor S."/>
            <person name="Leversha M."/>
            <person name="Lewis L."/>
            <person name="Liu W."/>
            <person name="Lloyd C."/>
            <person name="Lloyd D.M."/>
            <person name="Loulseged H."/>
            <person name="Loveland J.E."/>
            <person name="Lovell J.D."/>
            <person name="Lozado R."/>
            <person name="Lu J."/>
            <person name="Lyne R."/>
            <person name="Ma J."/>
            <person name="Maheshwari M."/>
            <person name="Matthews L.H."/>
            <person name="McDowall J."/>
            <person name="McLaren S."/>
            <person name="McMurray A."/>
            <person name="Meidl P."/>
            <person name="Meitinger T."/>
            <person name="Milne S."/>
            <person name="Miner G."/>
            <person name="Mistry S.L."/>
            <person name="Morgan M."/>
            <person name="Morris S."/>
            <person name="Mueller I."/>
            <person name="Mullikin J.C."/>
            <person name="Nguyen N."/>
            <person name="Nordsiek G."/>
            <person name="Nyakatura G."/>
            <person name="O'dell C.N."/>
            <person name="Okwuonu G."/>
            <person name="Palmer S."/>
            <person name="Pandian R."/>
            <person name="Parker D."/>
            <person name="Parrish J."/>
            <person name="Pasternak S."/>
            <person name="Patel D."/>
            <person name="Pearce A.V."/>
            <person name="Pearson D.M."/>
            <person name="Pelan S.E."/>
            <person name="Perez L."/>
            <person name="Porter K.M."/>
            <person name="Ramsey Y."/>
            <person name="Reichwald K."/>
            <person name="Rhodes S."/>
            <person name="Ridler K.A."/>
            <person name="Schlessinger D."/>
            <person name="Schueler M.G."/>
            <person name="Sehra H.K."/>
            <person name="Shaw-Smith C."/>
            <person name="Shen H."/>
            <person name="Sheridan E.M."/>
            <person name="Shownkeen R."/>
            <person name="Skuce C.D."/>
            <person name="Smith M.L."/>
            <person name="Sotheran E.C."/>
            <person name="Steingruber H.E."/>
            <person name="Steward C.A."/>
            <person name="Storey R."/>
            <person name="Swann R.M."/>
            <person name="Swarbreck D."/>
            <person name="Tabor P.E."/>
            <person name="Taudien S."/>
            <person name="Taylor T."/>
            <person name="Teague B."/>
            <person name="Thomas K."/>
            <person name="Thorpe A."/>
            <person name="Timms K."/>
            <person name="Tracey A."/>
            <person name="Trevanion S."/>
            <person name="Tromans A.C."/>
            <person name="d'Urso M."/>
            <person name="Verduzco D."/>
            <person name="Villasana D."/>
            <person name="Waldron L."/>
            <person name="Wall M."/>
            <person name="Wang Q."/>
            <person name="Warren J."/>
            <person name="Warry G.L."/>
            <person name="Wei X."/>
            <person name="West A."/>
            <person name="Whitehead S.L."/>
            <person name="Whiteley M.N."/>
            <person name="Wilkinson J.E."/>
            <person name="Willey D.L."/>
            <person name="Williams G."/>
            <person name="Williams L."/>
            <person name="Williamson A."/>
            <person name="Williamson H."/>
            <person name="Wilming L."/>
            <person name="Woodmansey R.L."/>
            <person name="Wray P.W."/>
            <person name="Yen J."/>
            <person name="Zhang J."/>
            <person name="Zhou J."/>
            <person name="Zoghbi H."/>
            <person name="Zorilla S."/>
            <person name="Buck D."/>
            <person name="Reinhardt R."/>
            <person name="Poustka A."/>
            <person name="Rosenthal A."/>
            <person name="Lehrach H."/>
            <person name="Meindl A."/>
            <person name="Minx P.J."/>
            <person name="Hillier L.W."/>
            <person name="Willard H.F."/>
            <person name="Wilson R.K."/>
            <person name="Waterston R.H."/>
            <person name="Rice C.M."/>
            <person name="Vaudin M."/>
            <person name="Coulson A."/>
            <person name="Nelson D.L."/>
            <person name="Weinstock G."/>
            <person name="Sulston J.E."/>
            <person name="Durbin R.M."/>
            <person name="Hubbard T."/>
            <person name="Gibbs R.A."/>
            <person name="Beck S."/>
            <person name="Rogers J."/>
            <person name="Bentley D.R."/>
        </authorList>
    </citation>
    <scope>NUCLEOTIDE SEQUENCE [LARGE SCALE GENOMIC DNA]</scope>
</reference>
<reference key="5">
    <citation type="submission" date="2005-09" db="EMBL/GenBank/DDBJ databases">
        <authorList>
            <person name="Mural R.J."/>
            <person name="Istrail S."/>
            <person name="Sutton G.G."/>
            <person name="Florea L."/>
            <person name="Halpern A.L."/>
            <person name="Mobarry C.M."/>
            <person name="Lippert R."/>
            <person name="Walenz B."/>
            <person name="Shatkay H."/>
            <person name="Dew I."/>
            <person name="Miller J.R."/>
            <person name="Flanigan M.J."/>
            <person name="Edwards N.J."/>
            <person name="Bolanos R."/>
            <person name="Fasulo D."/>
            <person name="Halldorsson B.V."/>
            <person name="Hannenhalli S."/>
            <person name="Turner R."/>
            <person name="Yooseph S."/>
            <person name="Lu F."/>
            <person name="Nusskern D.R."/>
            <person name="Shue B.C."/>
            <person name="Zheng X.H."/>
            <person name="Zhong F."/>
            <person name="Delcher A.L."/>
            <person name="Huson D.H."/>
            <person name="Kravitz S.A."/>
            <person name="Mouchard L."/>
            <person name="Reinert K."/>
            <person name="Remington K.A."/>
            <person name="Clark A.G."/>
            <person name="Waterman M.S."/>
            <person name="Eichler E.E."/>
            <person name="Adams M.D."/>
            <person name="Hunkapiller M.W."/>
            <person name="Myers E.W."/>
            <person name="Venter J.C."/>
        </authorList>
    </citation>
    <scope>NUCLEOTIDE SEQUENCE [LARGE SCALE GENOMIC DNA]</scope>
</reference>
<reference key="6">
    <citation type="journal article" date="2004" name="Genome Res.">
        <title>The status, quality, and expansion of the NIH full-length cDNA project: the Mammalian Gene Collection (MGC).</title>
        <authorList>
            <consortium name="The MGC Project Team"/>
        </authorList>
    </citation>
    <scope>NUCLEOTIDE SEQUENCE [LARGE SCALE MRNA] (ISOFORM 1)</scope>
</reference>
<reference key="7">
    <citation type="journal article" date="1994" name="Genes Chromosomes Cancer">
        <title>Cloning and characterization of the t(X;11) breakpoint from a leukemic cell line identify a new member of the forkhead gene family.</title>
        <authorList>
            <person name="Parry P."/>
            <person name="Wei Y."/>
            <person name="Evans G."/>
        </authorList>
    </citation>
    <scope>CHROMOSOMAL TRANSLOCATION</scope>
    <source>
        <tissue>Bone marrow</tissue>
    </source>
</reference>
<reference key="8">
    <citation type="journal article" date="1999" name="Nature">
        <title>Direct control of the forkhead transcription factor AFX by protein kinase B.</title>
        <authorList>
            <person name="Kops G.J.P.L."/>
            <person name="de Ruiter N.D."/>
            <person name="De Vries-Smits A.M.M."/>
            <person name="Powell D.R."/>
            <person name="Bos J.L."/>
            <person name="Burgering B.M.T."/>
        </authorList>
    </citation>
    <scope>FUNCTION</scope>
    <scope>PHOSPHORYLATION AT SER-197 AND SER-262</scope>
    <scope>MUTAGENESIS OF SER-197 AND SER-262</scope>
</reference>
<reference key="9">
    <citation type="journal article" date="1999" name="Proc. Natl. Acad. Sci. U.S.A.">
        <title>Regulation of nuclear translocation of forkhead transcription factor AFX by protein kinase B.</title>
        <authorList>
            <person name="Takaishi H."/>
            <person name="Konishi H."/>
            <person name="Matsuzaki H."/>
            <person name="Ono Y."/>
            <person name="Shirai Y."/>
            <person name="Saito N."/>
            <person name="Kitamura T."/>
            <person name="Ogawa W."/>
            <person name="Kasuga M."/>
            <person name="Kikkawa U."/>
            <person name="Nishizuka Y."/>
        </authorList>
    </citation>
    <scope>SUBCELLULAR LOCATION</scope>
    <scope>PHOSPHORYLATION AT SER-197 AND SER-262</scope>
    <scope>MUTAGENESIS OF THR-32; SER-197 AND SER-262</scope>
</reference>
<reference key="10">
    <citation type="journal article" date="2000" name="Nature">
        <title>AFX-like forkhead transcription factors mediate cell-cycle regulation by Ras and PKB through p27kip1.</title>
        <authorList>
            <person name="Medema R.H."/>
            <person name="Kops G.J.P.L."/>
            <person name="Bos J.L."/>
            <person name="Burgering B.M.T."/>
        </authorList>
    </citation>
    <scope>FUNCTION</scope>
</reference>
<reference key="11">
    <citation type="journal article" date="2003" name="J. Biol. Chem.">
        <title>The forkhead transcription factor FOXO4 induces the down-regulation of hypoxia-inducible factor 1 alpha by a von Hippel-Lindau protein-independent mechanism.</title>
        <authorList>
            <person name="Tang T.T.-L."/>
            <person name="Lasky L.A."/>
        </authorList>
    </citation>
    <scope>FUNCTION</scope>
</reference>
<reference key="12">
    <citation type="journal article" date="2004" name="J. Biol. Chem.">
        <title>FOXO4 is acetylated upon peroxide stress and deacetylated by the longevity protein hSir2(SIRT1).</title>
        <authorList>
            <person name="van der Horst A."/>
            <person name="Tertoolen L.G.J."/>
            <person name="de Vries-Smits L.M.M."/>
            <person name="Frye R.A."/>
            <person name="Medema R.H."/>
            <person name="Burgering B.M.T."/>
        </authorList>
    </citation>
    <scope>FUNCTION</scope>
    <scope>INTERACTION WITH CREBBP AND SIRT1</scope>
    <scope>ACETYLATION</scope>
</reference>
<reference key="13">
    <citation type="journal article" date="2005" name="Biochemistry">
        <title>14-3-3 protein interacts with nuclear localization sequence of forkhead transcription factor FoxO4.</title>
        <authorList>
            <person name="Obsilova V."/>
            <person name="Vecer J."/>
            <person name="Herman P."/>
            <person name="Pabianova A."/>
            <person name="Sulc M."/>
            <person name="Teisinger J."/>
            <person name="Boura E."/>
            <person name="Obsil T."/>
        </authorList>
    </citation>
    <scope>INTERACTION WITH YWHAZ</scope>
    <scope>SUBCELLULAR LOCATION</scope>
</reference>
<reference key="14">
    <citation type="journal article" date="2005" name="Dev. Cell">
        <title>Phenotypic modulation of smooth muscle cells through interaction of Foxo4 and myocardin.</title>
        <authorList>
            <person name="Liu Z.-P."/>
            <person name="Wang Z."/>
            <person name="Yanagisawa H."/>
            <person name="Olson E.N."/>
        </authorList>
    </citation>
    <scope>FUNCTION</scope>
    <scope>INTERACTION WITH MYOCD AND SRF</scope>
</reference>
<reference key="15">
    <citation type="journal article" date="2005" name="J. Biochem.">
        <title>Regulation of intracellular localization and transcriptional activity of FOXO4 by protein kinase B through phosphorylation at the motif sites conserved among the FOXO family.</title>
        <authorList>
            <person name="Matsuzaki H."/>
            <person name="Ichino A."/>
            <person name="Hayashi T."/>
            <person name="Yamamoto T."/>
            <person name="Kikkawa U."/>
        </authorList>
    </citation>
    <scope>PHOSPHORYLATION AT THR-32; SER-197 AND SER-262</scope>
    <scope>MUTAGENESIS OF THR-32; SER-197 AND SER-262</scope>
</reference>
<reference key="16">
    <citation type="journal article" date="2005" name="Oncogene">
        <title>Constitutively active FOXO4 inhibits Akt activity, regulates p27 Kip1 stability, and suppresses HER2-mediated tumorigenicity.</title>
        <authorList>
            <person name="Yang H."/>
            <person name="Zhao R."/>
            <person name="Yang H.-Y."/>
            <person name="Lee M.-H."/>
        </authorList>
    </citation>
    <scope>PHARMACEUTICAL USE</scope>
</reference>
<reference key="17">
    <citation type="journal article" date="2006" name="Nat. Cell Biol.">
        <title>FOXO4 transcriptional activity is regulated by monoubiquitination and USP7/HAUSP.</title>
        <authorList>
            <person name="van der Horst A."/>
            <person name="de Vries-Smits A.M."/>
            <person name="Brenkman A.B."/>
            <person name="van Triest M.H."/>
            <person name="van den Broek N."/>
            <person name="Colland F."/>
            <person name="Maurice M.M."/>
            <person name="Burgering B.M."/>
        </authorList>
    </citation>
    <scope>FUNCTION</scope>
    <scope>INTERACTION WITH USP7</scope>
    <scope>UBIQUITINATION</scope>
    <scope>DEUBIQUITINATION BY USP7</scope>
    <scope>SUBCELLULAR LOCATION</scope>
</reference>
<reference key="18">
    <citation type="journal article" date="2011" name="Antioxid. Redox Signal.">
        <title>Oxidative stress-dependent regulation of Forkhead box O4 activity by nemo-like kinase.</title>
        <authorList>
            <person name="Szypowska A.A."/>
            <person name="de Ruiter H."/>
            <person name="Meijer L.A.T."/>
            <person name="Smits L.M.M."/>
            <person name="Burgering B.M.T."/>
        </authorList>
    </citation>
    <scope>FUNCTION</scope>
    <scope>INTERACTION WITH NLK; CTNNB1 AND CREBBP</scope>
</reference>
<reference key="19">
    <citation type="journal article" date="2012" name="Nature">
        <title>Increased proteasome activity in human embryonic stem cells is regulated by PSMD11.</title>
        <authorList>
            <person name="Vilchez D."/>
            <person name="Boyer L."/>
            <person name="Morantte I."/>
            <person name="Lutz M."/>
            <person name="Merkwirth C."/>
            <person name="Joyce D."/>
            <person name="Spencer B."/>
            <person name="Page L."/>
            <person name="Masliah E."/>
            <person name="Berggren W.T."/>
            <person name="Gage F.H."/>
            <person name="Dillin A."/>
        </authorList>
    </citation>
    <scope>FUNCTION</scope>
    <scope>MUTAGENESIS OF THR-32; SER-197 AND SER-262</scope>
</reference>
<reference key="20">
    <citation type="journal article" date="2013" name="J. Proteome Res.">
        <title>Toward a comprehensive characterization of a human cancer cell phosphoproteome.</title>
        <authorList>
            <person name="Zhou H."/>
            <person name="Di Palma S."/>
            <person name="Preisinger C."/>
            <person name="Peng M."/>
            <person name="Polat A.N."/>
            <person name="Heck A.J."/>
            <person name="Mohammed S."/>
        </authorList>
    </citation>
    <scope>IDENTIFICATION BY MASS SPECTROMETRY [LARGE SCALE ANALYSIS]</scope>
    <source>
        <tissue>Cervix carcinoma</tissue>
    </source>
</reference>
<reference key="21">
    <citation type="journal article" date="2000" name="J. Biomol. NMR">
        <title>1H, 13C and 15N resonance assignments of the DNA binding domain of the human forkhead transcription factor AFX.</title>
        <authorList>
            <person name="Weigelt J."/>
            <person name="Climent I."/>
            <person name="Dahlman-Wright K."/>
            <person name="Wikstrom M."/>
        </authorList>
    </citation>
    <scope>STRUCTURE BY NMR OF 86-211</scope>
</reference>
<reference key="22">
    <citation type="journal article" date="2001" name="Biochemistry">
        <title>Solution structure of the DNA binding domain of the human forkhead transcription factor AFX (FOXO4).</title>
        <authorList>
            <person name="Weigelt J."/>
            <person name="Climent I."/>
            <person name="Dahlman-Wright K."/>
            <person name="Wikstrom M."/>
        </authorList>
    </citation>
    <scope>STRUCTURE BY NMR OF 86-211</scope>
</reference>
<feature type="chain" id="PRO_0000091875" description="Forkhead box protein O4">
    <location>
        <begin position="1"/>
        <end position="505"/>
    </location>
</feature>
<feature type="DNA-binding region" description="Fork-head" evidence="2">
    <location>
        <begin position="100"/>
        <end position="188"/>
    </location>
</feature>
<feature type="region of interest" description="Disordered" evidence="3">
    <location>
        <begin position="1"/>
        <end position="100"/>
    </location>
</feature>
<feature type="region of interest" description="Disordered" evidence="3">
    <location>
        <begin position="176"/>
        <end position="246"/>
    </location>
</feature>
<feature type="compositionally biased region" description="Polar residues" evidence="3">
    <location>
        <begin position="1"/>
        <end position="10"/>
    </location>
</feature>
<feature type="compositionally biased region" description="Basic and acidic residues" evidence="3">
    <location>
        <begin position="54"/>
        <end position="64"/>
    </location>
</feature>
<feature type="compositionally biased region" description="Basic residues" evidence="3">
    <location>
        <begin position="205"/>
        <end position="216"/>
    </location>
</feature>
<feature type="modified residue" description="Phosphothreonine; by PKB/AKT1" evidence="11">
    <location>
        <position position="32"/>
    </location>
</feature>
<feature type="modified residue" description="Phosphoserine; by PKB/AKT1" evidence="4 5 11">
    <location>
        <position position="197"/>
    </location>
</feature>
<feature type="modified residue" description="Phosphoserine; by PKB/AKT1" evidence="4 5 11">
    <location>
        <position position="262"/>
    </location>
</feature>
<feature type="splice variant" id="VSP_001552" description="In isoform Zeta." evidence="15">
    <location>
        <begin position="58"/>
        <end position="112"/>
    </location>
</feature>
<feature type="mutagenesis site" description="Abolishes phosphorylation. Protein is located mainly in nucleus and shows increased transcriptional activity. Increased transcriptional and proteasome activities in embryonic stem cells; when associated with A-197 and A-262." evidence="5 11 14">
    <original>T</original>
    <variation>A</variation>
    <location>
        <position position="32"/>
    </location>
</feature>
<feature type="mutagenesis site" description="Abolishes phosphorylation. Protein is located mainly in nucleus and shows increased transcriptional activity. Increased transcriptional and proteasome activities in embryonic stem cells; when associated with A-32 and A-262." evidence="4 5 11 14">
    <original>S</original>
    <variation>A</variation>
    <location>
        <position position="197"/>
    </location>
</feature>
<feature type="mutagenesis site" description="Abolishes phosphorylation. No effect on cellular location or transcriptional activity. Increased transcriptional and proteasome activities in embryonic stem cells; when associated with A-32 and A-197." evidence="4 5 11 14">
    <original>S</original>
    <variation>A</variation>
    <location>
        <position position="262"/>
    </location>
</feature>
<feature type="sequence conflict" description="In Ref. 2; CAA63819." evidence="16" ref="2">
    <original>MDPGNENSATE</original>
    <variation>MRIQPQK</variation>
    <location>
        <begin position="1"/>
        <end position="11"/>
    </location>
</feature>
<feature type="sequence conflict" description="In Ref. 1; CAA72156." evidence="16" ref="1">
    <original>QSRPRSCTWP</original>
    <variation>RAVPLLHLA</variation>
    <location>
        <begin position="25"/>
        <end position="34"/>
    </location>
</feature>
<feature type="sequence conflict" description="In Ref. 2; CAA63819." evidence="16" ref="2">
    <original>P</original>
    <variation>S</variation>
    <location>
        <position position="74"/>
    </location>
</feature>
<feature type="sequence conflict" description="In Ref. 1; CAA72156." evidence="16" ref="1">
    <original>G</original>
    <variation>A</variation>
    <location>
        <position position="79"/>
    </location>
</feature>
<feature type="sequence conflict" description="In Ref. 2; CAA63819." evidence="16" ref="2">
    <original>L</original>
    <variation>F</variation>
    <location>
        <position position="109"/>
    </location>
</feature>
<feature type="sequence conflict" description="In Ref. 2; CAA63819 and 3; AAL85197." evidence="16" ref="2 3">
    <original>P</original>
    <variation>R</variation>
    <location>
        <position position="422"/>
    </location>
</feature>
<feature type="helix" evidence="18">
    <location>
        <begin position="106"/>
        <end position="116"/>
    </location>
</feature>
<feature type="strand" evidence="17">
    <location>
        <begin position="117"/>
        <end position="119"/>
    </location>
</feature>
<feature type="helix" evidence="18">
    <location>
        <begin position="124"/>
        <end position="134"/>
    </location>
</feature>
<feature type="helix" evidence="18">
    <location>
        <begin position="136"/>
        <end position="138"/>
    </location>
</feature>
<feature type="helix" evidence="17">
    <location>
        <begin position="139"/>
        <end position="142"/>
    </location>
</feature>
<feature type="helix" evidence="18">
    <location>
        <begin position="149"/>
        <end position="160"/>
    </location>
</feature>
<feature type="strand" evidence="18">
    <location>
        <begin position="164"/>
        <end position="167"/>
    </location>
</feature>
<feature type="turn" evidence="17">
    <location>
        <begin position="170"/>
        <end position="172"/>
    </location>
</feature>
<feature type="strand" evidence="17">
    <location>
        <begin position="173"/>
        <end position="175"/>
    </location>
</feature>
<feature type="strand" evidence="18">
    <location>
        <begin position="177"/>
        <end position="180"/>
    </location>
</feature>
<comment type="function">
    <text evidence="4 6 7 8 9 12 13 14">Transcription factor involved in the regulation of the insulin signaling pathway. Binds to insulin-response elements (IREs) and can activate transcription of IGFBP1. Down-regulates expression of HIF1A and suppresses hypoxia-induced transcriptional activation of HIF1A-modulated genes. Also involved in negative regulation of the cell cycle. Involved in increased proteasome activity in embryonic stem cells (ESCs) by activating expression of PSMD11 in ESCs, leading to enhanced assembly of the 26S proteasome, followed by higher proteasome activity.</text>
</comment>
<comment type="subunit">
    <text evidence="1 8 9 10 12 13">Interacts with CREBBP/CBP, CTNNB1, MYOCD, SIRT1, SRF and YWHAZ. Acetylated by CREBBP/CBP and deacetylated by SIRT1. Binding of YWHAZ inhibits DNA-binding. Interacts with USP7; the interaction is enhanced in presence of hydrogen peroxide and occurs independently of TP53. Interacts with NLK, and this inhibits monoubiquitination and transcriptional activity. Interacts with FOXK1; the interaction inhibits MEF2C transactivation activity (By similarity).</text>
</comment>
<comment type="interaction">
    <interactant intactId="EBI-4481939">
        <id>P98177</id>
    </interactant>
    <interactant intactId="EBI-4481939">
        <id>P98177</id>
        <label>FOXO4</label>
    </interactant>
    <organismsDiffer>false</organismsDiffer>
    <experiments>2</experiments>
</comment>
<comment type="interaction">
    <interactant intactId="EBI-4481939">
        <id>P98177</id>
    </interactant>
    <interactant intactId="EBI-307352">
        <id>Q04864</id>
        <label>REL</label>
    </interactant>
    <organismsDiffer>false</organismsDiffer>
    <experiments>3</experiments>
</comment>
<comment type="interaction">
    <interactant intactId="EBI-4481939">
        <id>P98177</id>
    </interactant>
    <interactant intactId="EBI-476295">
        <id>P31947</id>
        <label>SFN</label>
    </interactant>
    <organismsDiffer>false</organismsDiffer>
    <experiments>4</experiments>
</comment>
<comment type="interaction">
    <interactant intactId="EBI-4481939">
        <id>P98177</id>
    </interactant>
    <interactant intactId="EBI-1802965">
        <id>Q96EB6</id>
        <label>SIRT1</label>
    </interactant>
    <organismsDiffer>false</organismsDiffer>
    <experiments>3</experiments>
</comment>
<comment type="interaction">
    <interactant intactId="EBI-4481939">
        <id>P98177</id>
    </interactant>
    <interactant intactId="EBI-347263">
        <id>Q13485</id>
        <label>SMAD4</label>
    </interactant>
    <organismsDiffer>false</organismsDiffer>
    <experiments>2</experiments>
</comment>
<comment type="interaction">
    <interactant intactId="EBI-4481939">
        <id>P98177</id>
    </interactant>
    <interactant intactId="EBI-356498">
        <id>P62258</id>
        <label>YWHAE</label>
    </interactant>
    <organismsDiffer>false</organismsDiffer>
    <experiments>2</experiments>
</comment>
<comment type="subcellular location">
    <subcellularLocation>
        <location>Cytoplasm</location>
    </subcellularLocation>
    <subcellularLocation>
        <location>Nucleus</location>
    </subcellularLocation>
    <text>When phosphorylated, translocated from nucleus to cytoplasm. Dephosphorylation triggers nuclear translocation. Monoubiquitination increases nuclear localization. When deubiquitinated, translocated from nucleus to cytoplasm.</text>
</comment>
<comment type="alternative products">
    <event type="alternative splicing"/>
    <isoform>
        <id>P98177-1</id>
        <name>1</name>
        <name>FOXO4a</name>
        <sequence type="displayed"/>
    </isoform>
    <isoform>
        <id>P98177-2</id>
        <name>Zeta</name>
        <name>AFXzeta</name>
        <name>FOXO4b</name>
        <sequence type="described" ref="VSP_001552"/>
    </isoform>
</comment>
<comment type="tissue specificity">
    <text>Heart, brain, placenta, lung, liver, skeletal muscle, kidney and pancreas. Isoform zeta is most abundant in the liver, kidney, and pancreas.</text>
</comment>
<comment type="PTM">
    <text evidence="8">Acetylation by CREBBP/CBP, which is induced by peroxidase stress, inhibits transcriptional activity. Deacetylation by SIRT1 is NAD-dependent and stimulates transcriptional activity.</text>
</comment>
<comment type="PTM">
    <text evidence="4 5 11">Phosphorylation by PKB/AKT1 inhibits transcriptional activity and is responsible for cytoplasmic localization. May be phosphorylated at multiple sites by NLK.</text>
</comment>
<comment type="PTM">
    <text evidence="12">Monoubiquitinated; monoubiquitination is induced by oxidative stress and reduced by deacetylase inhibitors; results in its relocalization to the nucleus and its increased transcriptional activity. Deubiquitinated by USP7; deubiquitination is induced by oxidative stress; enhances its interaction with USP7 and consequently, deubiquitination; increases its translocation to the cytoplasm and inhibits its transcriptional activity. Hydrogene-peroxide-induced ubiquitination and USP7-mediated deubiquitination have no major effect on its protein stability.</text>
</comment>
<comment type="disease">
    <text>A chromosomal aberration involving FOXO4 is found in acute leukemias. Translocation t(X;11)(q13;q23) with KMT2A/MLL1. The result is a rogue activator protein.</text>
</comment>
<comment type="pharmaceutical">
    <text>A constitutively active FOXO4 mutant where phosphorylation sites Thr-32, Ser-197 and Ser-262 have been mutated to alanine may have therapeutic potential in ERBB2/HER2-overexpressing cancers as it inhibits ERBB2-mediated cell survival, transformation and tumorigenicity.</text>
</comment>
<comment type="online information" name="Atlas of Genetics and Cytogenetics in Oncology and Haematology">
    <link uri="https://atlasgeneticsoncology.org/gene/57/AFX1"/>
</comment>
<accession>P98177</accession>
<accession>B7WPJ7</accession>
<accession>O43821</accession>
<accession>Q13720</accession>
<accession>Q3KPF1</accession>
<accession>Q8TDK9</accession>
<proteinExistence type="evidence at protein level"/>
<organism>
    <name type="scientific">Homo sapiens</name>
    <name type="common">Human</name>
    <dbReference type="NCBI Taxonomy" id="9606"/>
    <lineage>
        <taxon>Eukaryota</taxon>
        <taxon>Metazoa</taxon>
        <taxon>Chordata</taxon>
        <taxon>Craniata</taxon>
        <taxon>Vertebrata</taxon>
        <taxon>Euteleostomi</taxon>
        <taxon>Mammalia</taxon>
        <taxon>Eutheria</taxon>
        <taxon>Euarchontoglires</taxon>
        <taxon>Primates</taxon>
        <taxon>Haplorrhini</taxon>
        <taxon>Catarrhini</taxon>
        <taxon>Hominidae</taxon>
        <taxon>Homo</taxon>
    </lineage>
</organism>
<dbReference type="EMBL" id="Y11284">
    <property type="protein sequence ID" value="CAA72156.1"/>
    <property type="molecule type" value="Genomic_DNA"/>
</dbReference>
<dbReference type="EMBL" id="Y11285">
    <property type="protein sequence ID" value="CAA72156.1"/>
    <property type="status" value="JOINED"/>
    <property type="molecule type" value="Genomic_DNA"/>
</dbReference>
<dbReference type="EMBL" id="Y11286">
    <property type="protein sequence ID" value="CAA72156.1"/>
    <property type="status" value="JOINED"/>
    <property type="molecule type" value="Genomic_DNA"/>
</dbReference>
<dbReference type="EMBL" id="X93996">
    <property type="protein sequence ID" value="CAA63819.1"/>
    <property type="molecule type" value="mRNA"/>
</dbReference>
<dbReference type="EMBL" id="AF384029">
    <property type="protein sequence ID" value="AAL85197.1"/>
    <property type="molecule type" value="mRNA"/>
</dbReference>
<dbReference type="EMBL" id="AL590764">
    <property type="status" value="NOT_ANNOTATED_CDS"/>
    <property type="molecule type" value="Genomic_DNA"/>
</dbReference>
<dbReference type="EMBL" id="CH471132">
    <property type="protein sequence ID" value="EAX05321.1"/>
    <property type="molecule type" value="Genomic_DNA"/>
</dbReference>
<dbReference type="EMBL" id="BC106761">
    <property type="protein sequence ID" value="AAI06762.1"/>
    <property type="molecule type" value="mRNA"/>
</dbReference>
<dbReference type="EMBL" id="U10072">
    <property type="protein sequence ID" value="AAA82171.1"/>
    <property type="status" value="ALT_SEQ"/>
    <property type="molecule type" value="mRNA"/>
</dbReference>
<dbReference type="CCDS" id="CCDS43969.1">
    <molecule id="P98177-1"/>
</dbReference>
<dbReference type="CCDS" id="CCDS55440.1">
    <molecule id="P98177-2"/>
</dbReference>
<dbReference type="PIR" id="I38654">
    <property type="entry name" value="I38654"/>
</dbReference>
<dbReference type="RefSeq" id="NP_001164402.1">
    <molecule id="P98177-2"/>
    <property type="nucleotide sequence ID" value="NM_001170931.2"/>
</dbReference>
<dbReference type="RefSeq" id="NP_005929.2">
    <molecule id="P98177-1"/>
    <property type="nucleotide sequence ID" value="NM_005938.4"/>
</dbReference>
<dbReference type="PDB" id="1E17">
    <property type="method" value="NMR"/>
    <property type="chains" value="A=86-211"/>
</dbReference>
<dbReference type="PDB" id="3L2C">
    <property type="method" value="X-ray"/>
    <property type="resolution" value="1.87 A"/>
    <property type="chains" value="A=86-187"/>
</dbReference>
<dbReference type="PDBsum" id="1E17"/>
<dbReference type="PDBsum" id="3L2C"/>
<dbReference type="BMRB" id="P98177"/>
<dbReference type="SMR" id="P98177"/>
<dbReference type="BioGRID" id="110449">
    <property type="interactions" value="29"/>
</dbReference>
<dbReference type="CORUM" id="P98177"/>
<dbReference type="FunCoup" id="P98177">
    <property type="interactions" value="2013"/>
</dbReference>
<dbReference type="IntAct" id="P98177">
    <property type="interactions" value="18"/>
</dbReference>
<dbReference type="MINT" id="P98177"/>
<dbReference type="STRING" id="9606.ENSP00000363377"/>
<dbReference type="GlyGen" id="P98177">
    <property type="glycosylation" value="3 sites, 1 N-linked glycan (1 site), 1 O-linked glycan (1 site)"/>
</dbReference>
<dbReference type="iPTMnet" id="P98177"/>
<dbReference type="PhosphoSitePlus" id="P98177"/>
<dbReference type="BioMuta" id="FOXO4"/>
<dbReference type="DMDM" id="110825720"/>
<dbReference type="jPOST" id="P98177"/>
<dbReference type="MassIVE" id="P98177"/>
<dbReference type="PaxDb" id="9606-ENSP00000363377"/>
<dbReference type="PeptideAtlas" id="P98177"/>
<dbReference type="ProteomicsDB" id="57814">
    <molecule id="P98177-1"/>
</dbReference>
<dbReference type="ProteomicsDB" id="57815">
    <molecule id="P98177-2"/>
</dbReference>
<dbReference type="Antibodypedia" id="6096">
    <property type="antibodies" value="1042 antibodies from 45 providers"/>
</dbReference>
<dbReference type="DNASU" id="4303"/>
<dbReference type="Ensembl" id="ENST00000341558.4">
    <molecule id="P98177-2"/>
    <property type="protein sequence ID" value="ENSP00000342209.3"/>
    <property type="gene ID" value="ENSG00000184481.18"/>
</dbReference>
<dbReference type="Ensembl" id="ENST00000374259.8">
    <molecule id="P98177-1"/>
    <property type="protein sequence ID" value="ENSP00000363377.3"/>
    <property type="gene ID" value="ENSG00000184481.18"/>
</dbReference>
<dbReference type="GeneID" id="4303"/>
<dbReference type="KEGG" id="hsa:4303"/>
<dbReference type="MANE-Select" id="ENST00000374259.8">
    <property type="protein sequence ID" value="ENSP00000363377.3"/>
    <property type="RefSeq nucleotide sequence ID" value="NM_005938.4"/>
    <property type="RefSeq protein sequence ID" value="NP_005929.2"/>
</dbReference>
<dbReference type="UCSC" id="uc004dys.3">
    <molecule id="P98177-1"/>
    <property type="organism name" value="human"/>
</dbReference>
<dbReference type="AGR" id="HGNC:7139"/>
<dbReference type="CTD" id="4303"/>
<dbReference type="DisGeNET" id="4303"/>
<dbReference type="GeneCards" id="FOXO4"/>
<dbReference type="HGNC" id="HGNC:7139">
    <property type="gene designation" value="FOXO4"/>
</dbReference>
<dbReference type="HPA" id="ENSG00000184481">
    <property type="expression patterns" value="Tissue enhanced (placenta)"/>
</dbReference>
<dbReference type="MIM" id="300033">
    <property type="type" value="gene"/>
</dbReference>
<dbReference type="neXtProt" id="NX_P98177"/>
<dbReference type="OpenTargets" id="ENSG00000184481"/>
<dbReference type="PharmGKB" id="PA162388882"/>
<dbReference type="VEuPathDB" id="HostDB:ENSG00000184481"/>
<dbReference type="eggNOG" id="KOG2294">
    <property type="taxonomic scope" value="Eukaryota"/>
</dbReference>
<dbReference type="GeneTree" id="ENSGT00940000159334"/>
<dbReference type="HOGENOM" id="CLU_023456_1_1_1"/>
<dbReference type="InParanoid" id="P98177"/>
<dbReference type="OMA" id="VHTEGHS"/>
<dbReference type="OrthoDB" id="5954824at2759"/>
<dbReference type="PAN-GO" id="P98177">
    <property type="GO annotations" value="4 GO annotations based on evolutionary models"/>
</dbReference>
<dbReference type="PhylomeDB" id="P98177"/>
<dbReference type="TreeFam" id="TF315583"/>
<dbReference type="PathwayCommons" id="P98177"/>
<dbReference type="Reactome" id="R-HSA-198693">
    <property type="pathway name" value="AKT phosphorylates targets in the nucleus"/>
</dbReference>
<dbReference type="Reactome" id="R-HSA-5674400">
    <property type="pathway name" value="Constitutive Signaling by AKT1 E17K in Cancer"/>
</dbReference>
<dbReference type="Reactome" id="R-HSA-5689880">
    <property type="pathway name" value="Ub-specific processing proteases"/>
</dbReference>
<dbReference type="Reactome" id="R-HSA-9614399">
    <property type="pathway name" value="Regulation of localization of FOXO transcription factors"/>
</dbReference>
<dbReference type="Reactome" id="R-HSA-9614657">
    <property type="pathway name" value="FOXO-mediated transcription of cell death genes"/>
</dbReference>
<dbReference type="Reactome" id="R-HSA-9615017">
    <property type="pathway name" value="FOXO-mediated transcription of oxidative stress, metabolic and neuronal genes"/>
</dbReference>
<dbReference type="Reactome" id="R-HSA-9617629">
    <property type="pathway name" value="Regulation of FOXO transcriptional activity by acetylation"/>
</dbReference>
<dbReference type="Reactome" id="R-HSA-9617828">
    <property type="pathway name" value="FOXO-mediated transcription of cell cycle genes"/>
</dbReference>
<dbReference type="Reactome" id="R-HSA-9733709">
    <property type="pathway name" value="Cardiogenesis"/>
</dbReference>
<dbReference type="SignaLink" id="P98177"/>
<dbReference type="SIGNOR" id="P98177"/>
<dbReference type="BioGRID-ORCS" id="4303">
    <property type="hits" value="20 hits in 811 CRISPR screens"/>
</dbReference>
<dbReference type="ChiTaRS" id="FOXO4">
    <property type="organism name" value="human"/>
</dbReference>
<dbReference type="EvolutionaryTrace" id="P98177"/>
<dbReference type="GeneWiki" id="FOXO4"/>
<dbReference type="GenomeRNAi" id="4303"/>
<dbReference type="Pharos" id="P98177">
    <property type="development level" value="Tbio"/>
</dbReference>
<dbReference type="PRO" id="PR:P98177"/>
<dbReference type="Proteomes" id="UP000005640">
    <property type="component" value="Chromosome X"/>
</dbReference>
<dbReference type="RNAct" id="P98177">
    <property type="molecule type" value="protein"/>
</dbReference>
<dbReference type="Bgee" id="ENSG00000184481">
    <property type="expression patterns" value="Expressed in adrenal tissue and 206 other cell types or tissues"/>
</dbReference>
<dbReference type="GO" id="GO:0000785">
    <property type="term" value="C:chromatin"/>
    <property type="evidence" value="ECO:0000247"/>
    <property type="project" value="NTNU_SB"/>
</dbReference>
<dbReference type="GO" id="GO:0005737">
    <property type="term" value="C:cytoplasm"/>
    <property type="evidence" value="ECO:0000314"/>
    <property type="project" value="UniProtKB"/>
</dbReference>
<dbReference type="GO" id="GO:0005829">
    <property type="term" value="C:cytosol"/>
    <property type="evidence" value="ECO:0000314"/>
    <property type="project" value="HPA"/>
</dbReference>
<dbReference type="GO" id="GO:0016607">
    <property type="term" value="C:nuclear speck"/>
    <property type="evidence" value="ECO:0000314"/>
    <property type="project" value="HPA"/>
</dbReference>
<dbReference type="GO" id="GO:0005654">
    <property type="term" value="C:nucleoplasm"/>
    <property type="evidence" value="ECO:0000304"/>
    <property type="project" value="Reactome"/>
</dbReference>
<dbReference type="GO" id="GO:0005634">
    <property type="term" value="C:nucleus"/>
    <property type="evidence" value="ECO:0000314"/>
    <property type="project" value="UniProtKB"/>
</dbReference>
<dbReference type="GO" id="GO:0008013">
    <property type="term" value="F:beta-catenin binding"/>
    <property type="evidence" value="ECO:0000314"/>
    <property type="project" value="ParkinsonsUK-UCL"/>
</dbReference>
<dbReference type="GO" id="GO:0003677">
    <property type="term" value="F:DNA binding"/>
    <property type="evidence" value="ECO:0000314"/>
    <property type="project" value="UniProtKB"/>
</dbReference>
<dbReference type="GO" id="GO:0001228">
    <property type="term" value="F:DNA-binding transcription activator activity, RNA polymerase II-specific"/>
    <property type="evidence" value="ECO:0000314"/>
    <property type="project" value="NTNU_SB"/>
</dbReference>
<dbReference type="GO" id="GO:0003700">
    <property type="term" value="F:DNA-binding transcription factor activity"/>
    <property type="evidence" value="ECO:0000314"/>
    <property type="project" value="UniProtKB"/>
</dbReference>
<dbReference type="GO" id="GO:0000981">
    <property type="term" value="F:DNA-binding transcription factor activity, RNA polymerase II-specific"/>
    <property type="evidence" value="ECO:0000247"/>
    <property type="project" value="NTNU_SB"/>
</dbReference>
<dbReference type="GO" id="GO:0140297">
    <property type="term" value="F:DNA-binding transcription factor binding"/>
    <property type="evidence" value="ECO:0000353"/>
    <property type="project" value="UniProtKB"/>
</dbReference>
<dbReference type="GO" id="GO:0019899">
    <property type="term" value="F:enzyme binding"/>
    <property type="evidence" value="ECO:0000353"/>
    <property type="project" value="UniProtKB"/>
</dbReference>
<dbReference type="GO" id="GO:0042802">
    <property type="term" value="F:identical protein binding"/>
    <property type="evidence" value="ECO:0000353"/>
    <property type="project" value="IntAct"/>
</dbReference>
<dbReference type="GO" id="GO:0003676">
    <property type="term" value="F:nucleic acid binding"/>
    <property type="evidence" value="ECO:0000269"/>
    <property type="project" value="DisProt"/>
</dbReference>
<dbReference type="GO" id="GO:1990841">
    <property type="term" value="F:promoter-specific chromatin binding"/>
    <property type="evidence" value="ECO:0007669"/>
    <property type="project" value="Ensembl"/>
</dbReference>
<dbReference type="GO" id="GO:0000978">
    <property type="term" value="F:RNA polymerase II cis-regulatory region sequence-specific DNA binding"/>
    <property type="evidence" value="ECO:0000318"/>
    <property type="project" value="GO_Central"/>
</dbReference>
<dbReference type="GO" id="GO:0043565">
    <property type="term" value="F:sequence-specific DNA binding"/>
    <property type="evidence" value="ECO:0000314"/>
    <property type="project" value="NTNU_SB"/>
</dbReference>
<dbReference type="GO" id="GO:1990837">
    <property type="term" value="F:sequence-specific double-stranded DNA binding"/>
    <property type="evidence" value="ECO:0000314"/>
    <property type="project" value="ARUK-UCL"/>
</dbReference>
<dbReference type="GO" id="GO:0008286">
    <property type="term" value="P:insulin receptor signaling pathway"/>
    <property type="evidence" value="ECO:0000314"/>
    <property type="project" value="UniProtKB"/>
</dbReference>
<dbReference type="GO" id="GO:0007095">
    <property type="term" value="P:mitotic G2 DNA damage checkpoint signaling"/>
    <property type="evidence" value="ECO:0007669"/>
    <property type="project" value="Ensembl"/>
</dbReference>
<dbReference type="GO" id="GO:0007517">
    <property type="term" value="P:muscle organ development"/>
    <property type="evidence" value="ECO:0007669"/>
    <property type="project" value="UniProtKB-KW"/>
</dbReference>
<dbReference type="GO" id="GO:0016525">
    <property type="term" value="P:negative regulation of angiogenesis"/>
    <property type="evidence" value="ECO:0000314"/>
    <property type="project" value="UniProtKB"/>
</dbReference>
<dbReference type="GO" id="GO:0008285">
    <property type="term" value="P:negative regulation of cell population proliferation"/>
    <property type="evidence" value="ECO:0000314"/>
    <property type="project" value="UniProtKB"/>
</dbReference>
<dbReference type="GO" id="GO:0070317">
    <property type="term" value="P:negative regulation of G0 to G1 transition"/>
    <property type="evidence" value="ECO:0000314"/>
    <property type="project" value="UniProtKB"/>
</dbReference>
<dbReference type="GO" id="GO:0051151">
    <property type="term" value="P:negative regulation of smooth muscle cell differentiation"/>
    <property type="evidence" value="ECO:0000314"/>
    <property type="project" value="UniProtKB"/>
</dbReference>
<dbReference type="GO" id="GO:0014911">
    <property type="term" value="P:positive regulation of smooth muscle cell migration"/>
    <property type="evidence" value="ECO:0007669"/>
    <property type="project" value="Ensembl"/>
</dbReference>
<dbReference type="GO" id="GO:0045944">
    <property type="term" value="P:positive regulation of transcription by RNA polymerase II"/>
    <property type="evidence" value="ECO:0000314"/>
    <property type="project" value="NTNU_SB"/>
</dbReference>
<dbReference type="GO" id="GO:0006355">
    <property type="term" value="P:regulation of DNA-templated transcription"/>
    <property type="evidence" value="ECO:0000314"/>
    <property type="project" value="UniProtKB"/>
</dbReference>
<dbReference type="GO" id="GO:0006357">
    <property type="term" value="P:regulation of transcription by RNA polymerase II"/>
    <property type="evidence" value="ECO:0000318"/>
    <property type="project" value="GO_Central"/>
</dbReference>
<dbReference type="GO" id="GO:0031667">
    <property type="term" value="P:response to nutrient levels"/>
    <property type="evidence" value="ECO:0007669"/>
    <property type="project" value="Ensembl"/>
</dbReference>
<dbReference type="GO" id="GO:0006979">
    <property type="term" value="P:response to oxidative stress"/>
    <property type="evidence" value="ECO:0000314"/>
    <property type="project" value="UniProt"/>
</dbReference>
<dbReference type="GO" id="GO:1990785">
    <property type="term" value="P:response to water-immersion restraint stress"/>
    <property type="evidence" value="ECO:0007669"/>
    <property type="project" value="Ensembl"/>
</dbReference>
<dbReference type="GO" id="GO:0048863">
    <property type="term" value="P:stem cell differentiation"/>
    <property type="evidence" value="ECO:0000315"/>
    <property type="project" value="UniProtKB"/>
</dbReference>
<dbReference type="CDD" id="cd20062">
    <property type="entry name" value="FH_FOXO4"/>
    <property type="match status" value="1"/>
</dbReference>
<dbReference type="DisProt" id="DP01788"/>
<dbReference type="FunFam" id="1.10.10.10:FF:000032">
    <property type="entry name" value="Forkhead box protein O4"/>
    <property type="match status" value="1"/>
</dbReference>
<dbReference type="Gene3D" id="1.10.10.10">
    <property type="entry name" value="Winged helix-like DNA-binding domain superfamily/Winged helix DNA-binding domain"/>
    <property type="match status" value="1"/>
</dbReference>
<dbReference type="IDEAL" id="IID00460"/>
<dbReference type="InterPro" id="IPR047409">
    <property type="entry name" value="FH_FOXO4"/>
</dbReference>
<dbReference type="InterPro" id="IPR001766">
    <property type="entry name" value="Fork_head_dom"/>
</dbReference>
<dbReference type="InterPro" id="IPR032067">
    <property type="entry name" value="FOXO-TAD"/>
</dbReference>
<dbReference type="InterPro" id="IPR030456">
    <property type="entry name" value="TF_fork_head_CS_2"/>
</dbReference>
<dbReference type="InterPro" id="IPR036388">
    <property type="entry name" value="WH-like_DNA-bd_sf"/>
</dbReference>
<dbReference type="InterPro" id="IPR036390">
    <property type="entry name" value="WH_DNA-bd_sf"/>
</dbReference>
<dbReference type="PANTHER" id="PTHR45767">
    <property type="entry name" value="FORKHEAD BOX PROTEIN O"/>
    <property type="match status" value="1"/>
</dbReference>
<dbReference type="PANTHER" id="PTHR45767:SF3">
    <property type="entry name" value="FORKHEAD BOX PROTEIN O4"/>
    <property type="match status" value="1"/>
</dbReference>
<dbReference type="Pfam" id="PF00250">
    <property type="entry name" value="Forkhead"/>
    <property type="match status" value="1"/>
</dbReference>
<dbReference type="Pfam" id="PF16676">
    <property type="entry name" value="FOXO-TAD"/>
    <property type="match status" value="1"/>
</dbReference>
<dbReference type="PRINTS" id="PR00053">
    <property type="entry name" value="FORKHEAD"/>
</dbReference>
<dbReference type="SMART" id="SM00339">
    <property type="entry name" value="FH"/>
    <property type="match status" value="1"/>
</dbReference>
<dbReference type="SUPFAM" id="SSF46785">
    <property type="entry name" value="Winged helix' DNA-binding domain"/>
    <property type="match status" value="1"/>
</dbReference>
<dbReference type="PROSITE" id="PS00658">
    <property type="entry name" value="FORK_HEAD_2"/>
    <property type="match status" value="1"/>
</dbReference>
<dbReference type="PROSITE" id="PS50039">
    <property type="entry name" value="FORK_HEAD_3"/>
    <property type="match status" value="1"/>
</dbReference>
<gene>
    <name type="primary">FOXO4</name>
    <name type="synonym">AFX</name>
    <name type="synonym">AFX1</name>
    <name type="synonym">MLLT7</name>
</gene>